<gene>
    <name type="primary">bcsF</name>
    <name type="ordered locus">STM3623</name>
</gene>
<evidence type="ECO:0000255" key="1"/>
<evidence type="ECO:0000269" key="2">
    <source>
    </source>
</evidence>
<evidence type="ECO:0000305" key="3"/>
<name>BCSF_SALTY</name>
<sequence>MMTISDIVQIILFCALIFFPLGYLARHSLRRISDTTRLLFAKPRYVKPAGTLRRATKVKADKK</sequence>
<feature type="chain" id="PRO_0000417574" description="Cellulose biosynthesis protein BcsF">
    <location>
        <begin position="1"/>
        <end position="63"/>
    </location>
</feature>
<feature type="transmembrane region" description="Helical" evidence="1">
    <location>
        <begin position="4"/>
        <end position="24"/>
    </location>
</feature>
<proteinExistence type="inferred from homology"/>
<keyword id="KW-0997">Cell inner membrane</keyword>
<keyword id="KW-1003">Cell membrane</keyword>
<keyword id="KW-0135">Cellulose biosynthesis</keyword>
<keyword id="KW-0472">Membrane</keyword>
<keyword id="KW-1185">Reference proteome</keyword>
<keyword id="KW-0812">Transmembrane</keyword>
<keyword id="KW-1133">Transmembrane helix</keyword>
<reference key="1">
    <citation type="journal article" date="2002" name="Mol. Microbiol.">
        <title>Genetic analysis of Salmonella enteritidis biofilm formation: critical role of cellulose.</title>
        <authorList>
            <person name="Solano C."/>
            <person name="Garcia B."/>
            <person name="Valle J."/>
            <person name="Berasain C."/>
            <person name="Ghigo J.-M."/>
            <person name="Gamazo C."/>
            <person name="Lasa I."/>
        </authorList>
    </citation>
    <scope>NUCLEOTIDE SEQUENCE [GENOMIC DNA]</scope>
    <scope>FUNCTION</scope>
    <scope>GENE NAME</scope>
    <source>
        <strain>LT2</strain>
    </source>
</reference>
<reference key="2">
    <citation type="journal article" date="2001" name="Nature">
        <title>Complete genome sequence of Salmonella enterica serovar Typhimurium LT2.</title>
        <authorList>
            <person name="McClelland M."/>
            <person name="Sanderson K.E."/>
            <person name="Spieth J."/>
            <person name="Clifton S.W."/>
            <person name="Latreille P."/>
            <person name="Courtney L."/>
            <person name="Porwollik S."/>
            <person name="Ali J."/>
            <person name="Dante M."/>
            <person name="Du F."/>
            <person name="Hou S."/>
            <person name="Layman D."/>
            <person name="Leonard S."/>
            <person name="Nguyen C."/>
            <person name="Scott K."/>
            <person name="Holmes A."/>
            <person name="Grewal N."/>
            <person name="Mulvaney E."/>
            <person name="Ryan E."/>
            <person name="Sun H."/>
            <person name="Florea L."/>
            <person name="Miller W."/>
            <person name="Stoneking T."/>
            <person name="Nhan M."/>
            <person name="Waterston R."/>
            <person name="Wilson R.K."/>
        </authorList>
    </citation>
    <scope>NUCLEOTIDE SEQUENCE [LARGE SCALE GENOMIC DNA]</scope>
    <source>
        <strain>LT2 / SGSC1412 / ATCC 700720</strain>
    </source>
</reference>
<dbReference type="EMBL" id="AJ315148">
    <property type="protein sequence ID" value="CAC86201.1"/>
    <property type="molecule type" value="Genomic_DNA"/>
</dbReference>
<dbReference type="EMBL" id="AE006468">
    <property type="protein sequence ID" value="AAL22483.1"/>
    <property type="molecule type" value="Genomic_DNA"/>
</dbReference>
<dbReference type="RefSeq" id="WP_000988321.1">
    <property type="nucleotide sequence ID" value="NC_003197.2"/>
</dbReference>
<dbReference type="SMR" id="Q7CPI8"/>
<dbReference type="STRING" id="99287.STM3623"/>
<dbReference type="PaxDb" id="99287-STM3623"/>
<dbReference type="KEGG" id="stm:STM3623"/>
<dbReference type="PATRIC" id="fig|99287.12.peg.3830"/>
<dbReference type="HOGENOM" id="CLU_198346_0_0_6"/>
<dbReference type="OMA" id="GYYARHS"/>
<dbReference type="BioCyc" id="SENT99287:STM3623-MONOMER"/>
<dbReference type="Proteomes" id="UP000001014">
    <property type="component" value="Chromosome"/>
</dbReference>
<dbReference type="GO" id="GO:0005886">
    <property type="term" value="C:plasma membrane"/>
    <property type="evidence" value="ECO:0007669"/>
    <property type="project" value="UniProtKB-SubCell"/>
</dbReference>
<dbReference type="GO" id="GO:0030244">
    <property type="term" value="P:cellulose biosynthetic process"/>
    <property type="evidence" value="ECO:0007669"/>
    <property type="project" value="UniProtKB-KW"/>
</dbReference>
<dbReference type="InterPro" id="IPR019995">
    <property type="entry name" value="Cellulose_BcsF/YhjT"/>
</dbReference>
<dbReference type="NCBIfam" id="TIGR03493">
    <property type="entry name" value="cellullose_BcsF"/>
    <property type="match status" value="1"/>
</dbReference>
<dbReference type="Pfam" id="PF11120">
    <property type="entry name" value="CBP_BcsF"/>
    <property type="match status" value="1"/>
</dbReference>
<protein>
    <recommendedName>
        <fullName>Cellulose biosynthesis protein BcsF</fullName>
    </recommendedName>
</protein>
<organism>
    <name type="scientific">Salmonella typhimurium (strain LT2 / SGSC1412 / ATCC 700720)</name>
    <dbReference type="NCBI Taxonomy" id="99287"/>
    <lineage>
        <taxon>Bacteria</taxon>
        <taxon>Pseudomonadati</taxon>
        <taxon>Pseudomonadota</taxon>
        <taxon>Gammaproteobacteria</taxon>
        <taxon>Enterobacterales</taxon>
        <taxon>Enterobacteriaceae</taxon>
        <taxon>Salmonella</taxon>
    </lineage>
</organism>
<accession>Q7CPI8</accession>
<accession>Q7AY57</accession>
<comment type="function">
    <text evidence="2">Required for cellulose biosynthesis.</text>
</comment>
<comment type="subcellular location">
    <subcellularLocation>
        <location evidence="3">Cell inner membrane</location>
        <topology evidence="3">Single-pass membrane protein</topology>
    </subcellularLocation>
</comment>
<comment type="similarity">
    <text evidence="3">Belongs to the BcsF family.</text>
</comment>